<accession>P45451</accession>
<accession>P74090</accession>
<keyword id="KW-1185">Reference proteome</keyword>
<organism>
    <name type="scientific">Synechocystis sp. (strain ATCC 27184 / PCC 6803 / Kazusa)</name>
    <dbReference type="NCBI Taxonomy" id="1111708"/>
    <lineage>
        <taxon>Bacteria</taxon>
        <taxon>Bacillati</taxon>
        <taxon>Cyanobacteriota</taxon>
        <taxon>Cyanophyceae</taxon>
        <taxon>Synechococcales</taxon>
        <taxon>Merismopediaceae</taxon>
        <taxon>Synechocystis</taxon>
    </lineage>
</organism>
<reference key="1">
    <citation type="journal article" date="1995" name="Microbiology">
        <title>Characterization of the murF gene of the cyanobacterium Synechocystis sp. PCC 6803.</title>
        <authorList>
            <person name="Malakhov M.P."/>
            <person name="Los D.A."/>
            <person name="Wada H."/>
            <person name="Semenenko V.E."/>
            <person name="Murata N."/>
        </authorList>
    </citation>
    <scope>NUCLEOTIDE SEQUENCE [GENOMIC DNA]</scope>
</reference>
<reference key="2">
    <citation type="journal article" date="1996" name="DNA Res.">
        <title>Sequence analysis of the genome of the unicellular cyanobacterium Synechocystis sp. strain PCC6803. II. Sequence determination of the entire genome and assignment of potential protein-coding regions.</title>
        <authorList>
            <person name="Kaneko T."/>
            <person name="Sato S."/>
            <person name="Kotani H."/>
            <person name="Tanaka A."/>
            <person name="Asamizu E."/>
            <person name="Nakamura Y."/>
            <person name="Miyajima N."/>
            <person name="Hirosawa M."/>
            <person name="Sugiura M."/>
            <person name="Sasamoto S."/>
            <person name="Kimura T."/>
            <person name="Hosouchi T."/>
            <person name="Matsuno A."/>
            <person name="Muraki A."/>
            <person name="Nakazaki N."/>
            <person name="Naruo K."/>
            <person name="Okumura S."/>
            <person name="Shimpo S."/>
            <person name="Takeuchi C."/>
            <person name="Wada T."/>
            <person name="Watanabe A."/>
            <person name="Yamada M."/>
            <person name="Yasuda M."/>
            <person name="Tabata S."/>
        </authorList>
    </citation>
    <scope>NUCLEOTIDE SEQUENCE [LARGE SCALE GENOMIC DNA]</scope>
    <source>
        <strain>ATCC 27184 / PCC 6803 / Kazusa</strain>
    </source>
</reference>
<name>Y1247_SYNY3</name>
<gene>
    <name type="ordered locus">sll1247</name>
</gene>
<evidence type="ECO:0000305" key="1"/>
<dbReference type="EMBL" id="X62437">
    <property type="protein sequence ID" value="CAA44302.1"/>
    <property type="molecule type" value="Genomic_DNA"/>
</dbReference>
<dbReference type="EMBL" id="BA000022">
    <property type="protein sequence ID" value="BAA18170.1"/>
    <property type="molecule type" value="Genomic_DNA"/>
</dbReference>
<dbReference type="PIR" id="S75609">
    <property type="entry name" value="S75609"/>
</dbReference>
<dbReference type="IntAct" id="P45451">
    <property type="interactions" value="6"/>
</dbReference>
<dbReference type="STRING" id="1148.gene:10499043"/>
<dbReference type="PaxDb" id="1148-1653255"/>
<dbReference type="EnsemblBacteria" id="BAA18170">
    <property type="protein sequence ID" value="BAA18170"/>
    <property type="gene ID" value="BAA18170"/>
</dbReference>
<dbReference type="KEGG" id="syn:sll1247"/>
<dbReference type="eggNOG" id="COG1672">
    <property type="taxonomic scope" value="Bacteria"/>
</dbReference>
<dbReference type="InParanoid" id="P45451"/>
<dbReference type="Proteomes" id="UP000001425">
    <property type="component" value="Chromosome"/>
</dbReference>
<feature type="chain" id="PRO_0000157885" description="Uncharacterized protein sll1247">
    <location>
        <begin position="1"/>
        <end position="457"/>
    </location>
</feature>
<feature type="sequence conflict" description="In Ref. 1; CAA44302." evidence="1" ref="1">
    <original>N</original>
    <variation>Y</variation>
    <location>
        <position position="72"/>
    </location>
</feature>
<proteinExistence type="predicted"/>
<sequence length="457" mass="52741">MSLTLSHDFVFIIDFSCSQFAPFSPKRVTTVNYNHPQASDPYKMNDEQAIYDYLLDLVQSVEGERVLEVMGNLFLSGQGSSQGQVSTHLEKVIRVKNNTEEFNYFFNRCCYILINYWQLSPQTQRSIPQLVNMVEKAVANISPGGNTKGNIRQLVKNFTLSEQFVRLKRLASVVSTKFETKSSSVGTLIHRYPYLYDYCLMGDDSSREHRQTIHRIKAQNERKFEINLSQYVTYRVRMARTNKAGLILPDKELIKPVQNPTLLSDRDLNSSLKHFVGSVENGQSYRSLSKSFRNHVAYTQSFGTFKDELYEYIRGSLQNNYKQGSFDKKLFDLFQNAYPECNQQKPTEFLMMRTSSQLLNFLVVEGSKNPDHYVFIDLISNIGVKKTIGVLLKIVLFCSKVKPYLEKRFSILFNHYESVAREGVPWLVKTLENMQVAFSIHFGRVDLSSLNRSHLPT</sequence>
<protein>
    <recommendedName>
        <fullName>Uncharacterized protein sll1247</fullName>
    </recommendedName>
</protein>